<organism>
    <name type="scientific">Pseudomonas fluorescens (strain Pf0-1)</name>
    <dbReference type="NCBI Taxonomy" id="205922"/>
    <lineage>
        <taxon>Bacteria</taxon>
        <taxon>Pseudomonadati</taxon>
        <taxon>Pseudomonadota</taxon>
        <taxon>Gammaproteobacteria</taxon>
        <taxon>Pseudomonadales</taxon>
        <taxon>Pseudomonadaceae</taxon>
        <taxon>Pseudomonas</taxon>
    </lineage>
</organism>
<comment type="function">
    <text evidence="1">Excises uracil residues from the DNA which can arise as a result of misincorporation of dUMP residues by DNA polymerase or due to deamination of cytosine.</text>
</comment>
<comment type="catalytic activity">
    <reaction evidence="1">
        <text>Hydrolyzes single-stranded DNA or mismatched double-stranded DNA and polynucleotides, releasing free uracil.</text>
        <dbReference type="EC" id="3.2.2.27"/>
    </reaction>
</comment>
<comment type="subcellular location">
    <subcellularLocation>
        <location evidence="1">Cytoplasm</location>
    </subcellularLocation>
</comment>
<comment type="similarity">
    <text evidence="1">Belongs to the uracil-DNA glycosylase (UDG) superfamily. UNG family.</text>
</comment>
<proteinExistence type="inferred from homology"/>
<protein>
    <recommendedName>
        <fullName evidence="1">Uracil-DNA glycosylase</fullName>
        <shortName evidence="1">UDG</shortName>
        <ecNumber evidence="1">3.2.2.27</ecNumber>
    </recommendedName>
</protein>
<name>UNG_PSEPF</name>
<reference key="1">
    <citation type="journal article" date="2009" name="Genome Biol.">
        <title>Genomic and genetic analyses of diversity and plant interactions of Pseudomonas fluorescens.</title>
        <authorList>
            <person name="Silby M.W."/>
            <person name="Cerdeno-Tarraga A.M."/>
            <person name="Vernikos G.S."/>
            <person name="Giddens S.R."/>
            <person name="Jackson R.W."/>
            <person name="Preston G.M."/>
            <person name="Zhang X.-X."/>
            <person name="Moon C.D."/>
            <person name="Gehrig S.M."/>
            <person name="Godfrey S.A.C."/>
            <person name="Knight C.G."/>
            <person name="Malone J.G."/>
            <person name="Robinson Z."/>
            <person name="Spiers A.J."/>
            <person name="Harris S."/>
            <person name="Challis G.L."/>
            <person name="Yaxley A.M."/>
            <person name="Harris D."/>
            <person name="Seeger K."/>
            <person name="Murphy L."/>
            <person name="Rutter S."/>
            <person name="Squares R."/>
            <person name="Quail M.A."/>
            <person name="Saunders E."/>
            <person name="Mavromatis K."/>
            <person name="Brettin T.S."/>
            <person name="Bentley S.D."/>
            <person name="Hothersall J."/>
            <person name="Stephens E."/>
            <person name="Thomas C.M."/>
            <person name="Parkhill J."/>
            <person name="Levy S.B."/>
            <person name="Rainey P.B."/>
            <person name="Thomson N.R."/>
        </authorList>
    </citation>
    <scope>NUCLEOTIDE SEQUENCE [LARGE SCALE GENOMIC DNA]</scope>
    <source>
        <strain>Pf0-1</strain>
    </source>
</reference>
<feature type="chain" id="PRO_1000009931" description="Uracil-DNA glycosylase">
    <location>
        <begin position="1"/>
        <end position="231"/>
    </location>
</feature>
<feature type="active site" description="Proton acceptor" evidence="1">
    <location>
        <position position="70"/>
    </location>
</feature>
<accession>Q3KGL4</accession>
<sequence>MTADDRIKLEPSWKEALRAEFDQPYMTELRTFLQQERAAGKEIYPPGPMIFNALNSTPLDKVKVVILGQDPYHGPGQAHGLCFSVQPGVPAPPSLVNIYKELKRDLNIDIPNHGYLQSWADQGVLMLNTTMTVERANANAHKDKGWQFFTDRIIEVVSQKQPHLVFMLWGAHAQSKQKLIDATKHLVLTSVHPSPLSAYRGFLGCGHFSRTNKFLEQNGEAPIEWRLPPVV</sequence>
<gene>
    <name evidence="1" type="primary">ung</name>
    <name type="ordered locus">Pfl01_1349</name>
</gene>
<keyword id="KW-0963">Cytoplasm</keyword>
<keyword id="KW-0227">DNA damage</keyword>
<keyword id="KW-0234">DNA repair</keyword>
<keyword id="KW-0378">Hydrolase</keyword>
<dbReference type="EC" id="3.2.2.27" evidence="1"/>
<dbReference type="EMBL" id="CP000094">
    <property type="protein sequence ID" value="ABA73092.1"/>
    <property type="molecule type" value="Genomic_DNA"/>
</dbReference>
<dbReference type="RefSeq" id="WP_011332892.1">
    <property type="nucleotide sequence ID" value="NC_007492.2"/>
</dbReference>
<dbReference type="SMR" id="Q3KGL4"/>
<dbReference type="KEGG" id="pfo:Pfl01_1349"/>
<dbReference type="eggNOG" id="COG0692">
    <property type="taxonomic scope" value="Bacteria"/>
</dbReference>
<dbReference type="HOGENOM" id="CLU_032162_3_1_6"/>
<dbReference type="Proteomes" id="UP000002704">
    <property type="component" value="Chromosome"/>
</dbReference>
<dbReference type="GO" id="GO:0005737">
    <property type="term" value="C:cytoplasm"/>
    <property type="evidence" value="ECO:0007669"/>
    <property type="project" value="UniProtKB-SubCell"/>
</dbReference>
<dbReference type="GO" id="GO:0004844">
    <property type="term" value="F:uracil DNA N-glycosylase activity"/>
    <property type="evidence" value="ECO:0007669"/>
    <property type="project" value="UniProtKB-UniRule"/>
</dbReference>
<dbReference type="GO" id="GO:0097510">
    <property type="term" value="P:base-excision repair, AP site formation via deaminated base removal"/>
    <property type="evidence" value="ECO:0007669"/>
    <property type="project" value="TreeGrafter"/>
</dbReference>
<dbReference type="CDD" id="cd10027">
    <property type="entry name" value="UDG-F1-like"/>
    <property type="match status" value="1"/>
</dbReference>
<dbReference type="FunFam" id="3.40.470.10:FF:000001">
    <property type="entry name" value="Uracil-DNA glycosylase"/>
    <property type="match status" value="1"/>
</dbReference>
<dbReference type="Gene3D" id="3.40.470.10">
    <property type="entry name" value="Uracil-DNA glycosylase-like domain"/>
    <property type="match status" value="1"/>
</dbReference>
<dbReference type="HAMAP" id="MF_00148">
    <property type="entry name" value="UDG"/>
    <property type="match status" value="1"/>
</dbReference>
<dbReference type="InterPro" id="IPR002043">
    <property type="entry name" value="UDG_fam1"/>
</dbReference>
<dbReference type="InterPro" id="IPR018085">
    <property type="entry name" value="Ura-DNA_Glyclase_AS"/>
</dbReference>
<dbReference type="InterPro" id="IPR005122">
    <property type="entry name" value="Uracil-DNA_glycosylase-like"/>
</dbReference>
<dbReference type="InterPro" id="IPR036895">
    <property type="entry name" value="Uracil-DNA_glycosylase-like_sf"/>
</dbReference>
<dbReference type="NCBIfam" id="NF003588">
    <property type="entry name" value="PRK05254.1-1"/>
    <property type="match status" value="1"/>
</dbReference>
<dbReference type="NCBIfam" id="NF003589">
    <property type="entry name" value="PRK05254.1-2"/>
    <property type="match status" value="1"/>
</dbReference>
<dbReference type="NCBIfam" id="NF003591">
    <property type="entry name" value="PRK05254.1-4"/>
    <property type="match status" value="1"/>
</dbReference>
<dbReference type="NCBIfam" id="NF003592">
    <property type="entry name" value="PRK05254.1-5"/>
    <property type="match status" value="1"/>
</dbReference>
<dbReference type="NCBIfam" id="TIGR00628">
    <property type="entry name" value="ung"/>
    <property type="match status" value="1"/>
</dbReference>
<dbReference type="PANTHER" id="PTHR11264">
    <property type="entry name" value="URACIL-DNA GLYCOSYLASE"/>
    <property type="match status" value="1"/>
</dbReference>
<dbReference type="PANTHER" id="PTHR11264:SF0">
    <property type="entry name" value="URACIL-DNA GLYCOSYLASE"/>
    <property type="match status" value="1"/>
</dbReference>
<dbReference type="Pfam" id="PF03167">
    <property type="entry name" value="UDG"/>
    <property type="match status" value="1"/>
</dbReference>
<dbReference type="SMART" id="SM00986">
    <property type="entry name" value="UDG"/>
    <property type="match status" value="1"/>
</dbReference>
<dbReference type="SMART" id="SM00987">
    <property type="entry name" value="UreE_C"/>
    <property type="match status" value="1"/>
</dbReference>
<dbReference type="SUPFAM" id="SSF52141">
    <property type="entry name" value="Uracil-DNA glycosylase-like"/>
    <property type="match status" value="1"/>
</dbReference>
<dbReference type="PROSITE" id="PS00130">
    <property type="entry name" value="U_DNA_GLYCOSYLASE"/>
    <property type="match status" value="1"/>
</dbReference>
<evidence type="ECO:0000255" key="1">
    <source>
        <dbReference type="HAMAP-Rule" id="MF_00148"/>
    </source>
</evidence>